<dbReference type="EC" id="3.5.1.84" evidence="1 2"/>
<dbReference type="EMBL" id="AM236084">
    <property type="protein sequence ID" value="CAK10578.1"/>
    <property type="molecule type" value="Genomic_DNA"/>
</dbReference>
<dbReference type="RefSeq" id="WP_011654379.1">
    <property type="nucleotide sequence ID" value="NC_008381.1"/>
</dbReference>
<dbReference type="PDB" id="5BK6">
    <property type="method" value="X-ray"/>
    <property type="resolution" value="1.59 A"/>
    <property type="chains" value="A/B/C/D=1-233"/>
</dbReference>
<dbReference type="PDB" id="6AZN">
    <property type="method" value="X-ray"/>
    <property type="resolution" value="1.75 A"/>
    <property type="chains" value="A/B/C/D/F/G/H/I=1-233"/>
</dbReference>
<dbReference type="PDB" id="6AZO">
    <property type="method" value="X-ray"/>
    <property type="resolution" value="2.46 A"/>
    <property type="chains" value="A/B/C/D=1-233"/>
</dbReference>
<dbReference type="PDB" id="6AZQ">
    <property type="method" value="X-ray"/>
    <property type="resolution" value="2.22 A"/>
    <property type="chains" value="A/B/C/D/E/F/G/H=1-233"/>
</dbReference>
<dbReference type="PDB" id="6AZS">
    <property type="method" value="X-ray"/>
    <property type="resolution" value="1.59 A"/>
    <property type="chains" value="A/B/C/D=1-233"/>
</dbReference>
<dbReference type="PDBsum" id="5BK6"/>
<dbReference type="PDBsum" id="6AZN"/>
<dbReference type="PDBsum" id="6AZO"/>
<dbReference type="PDBsum" id="6AZQ"/>
<dbReference type="PDBsum" id="6AZS"/>
<dbReference type="SMR" id="Q1M7F4"/>
<dbReference type="EnsemblBacteria" id="CAK10578">
    <property type="protein sequence ID" value="CAK10578"/>
    <property type="gene ID" value="pRL100352"/>
</dbReference>
<dbReference type="KEGG" id="rle:pRL100352"/>
<dbReference type="HOGENOM" id="CLU_068979_8_0_5"/>
<dbReference type="BioCyc" id="MetaCyc:MONOMER-20658"/>
<dbReference type="BRENDA" id="3.5.1.84">
    <property type="organism ID" value="5344"/>
</dbReference>
<dbReference type="SABIO-RK" id="Q1M7F4"/>
<dbReference type="Proteomes" id="UP000006575">
    <property type="component" value="Plasmid pRL10"/>
</dbReference>
<dbReference type="GO" id="GO:0016787">
    <property type="term" value="F:hydrolase activity"/>
    <property type="evidence" value="ECO:0007669"/>
    <property type="project" value="UniProtKB-KW"/>
</dbReference>
<dbReference type="CDD" id="cd00431">
    <property type="entry name" value="cysteine_hydrolases"/>
    <property type="match status" value="1"/>
</dbReference>
<dbReference type="Gene3D" id="3.40.50.850">
    <property type="entry name" value="Isochorismatase-like"/>
    <property type="match status" value="1"/>
</dbReference>
<dbReference type="InterPro" id="IPR000868">
    <property type="entry name" value="Isochorismatase-like_dom"/>
</dbReference>
<dbReference type="InterPro" id="IPR050272">
    <property type="entry name" value="Isochorismatase-like_hydrls"/>
</dbReference>
<dbReference type="InterPro" id="IPR036380">
    <property type="entry name" value="Isochorismatase-like_sf"/>
</dbReference>
<dbReference type="PANTHER" id="PTHR43540:SF9">
    <property type="entry name" value="FAMILY HYDROLASE, PUTATIVE (AFU_ORTHOLOGUE AFUA_2G08700)-RELATED"/>
    <property type="match status" value="1"/>
</dbReference>
<dbReference type="PANTHER" id="PTHR43540">
    <property type="entry name" value="PEROXYUREIDOACRYLATE/UREIDOACRYLATE AMIDOHYDROLASE-RELATED"/>
    <property type="match status" value="1"/>
</dbReference>
<dbReference type="Pfam" id="PF00857">
    <property type="entry name" value="Isochorismatase"/>
    <property type="match status" value="1"/>
</dbReference>
<dbReference type="SUPFAM" id="SSF52499">
    <property type="entry name" value="Isochorismatase-like hydrolases"/>
    <property type="match status" value="1"/>
</dbReference>
<gene>
    <name evidence="4" type="primary">biuH</name>
    <name evidence="7" type="ordered locus">pRL100352</name>
</gene>
<proteinExistence type="evidence at protein level"/>
<reference key="1">
    <citation type="journal article" date="2006" name="Genome Biol.">
        <title>The genome of Rhizobium leguminosarum has recognizable core and accessory components.</title>
        <authorList>
            <person name="Young J.P.W."/>
            <person name="Crossman L.C."/>
            <person name="Johnston A.W.B."/>
            <person name="Thomson N.R."/>
            <person name="Ghazoui Z.F."/>
            <person name="Hull K.H."/>
            <person name="Wexler M."/>
            <person name="Curson A.R.J."/>
            <person name="Todd J.D."/>
            <person name="Poole P.S."/>
            <person name="Mauchline T.H."/>
            <person name="East A.K."/>
            <person name="Quail M.A."/>
            <person name="Churcher C."/>
            <person name="Arrowsmith C."/>
            <person name="Cherevach I."/>
            <person name="Chillingworth T."/>
            <person name="Clarke K."/>
            <person name="Cronin A."/>
            <person name="Davis P."/>
            <person name="Fraser A."/>
            <person name="Hance Z."/>
            <person name="Hauser H."/>
            <person name="Jagels K."/>
            <person name="Moule S."/>
            <person name="Mungall K."/>
            <person name="Norbertczak H."/>
            <person name="Rabbinowitsch E."/>
            <person name="Sanders M."/>
            <person name="Simmonds M."/>
            <person name="Whitehead S."/>
            <person name="Parkhill J."/>
        </authorList>
    </citation>
    <scope>NUCLEOTIDE SEQUENCE [LARGE SCALE GENOMIC DNA]</scope>
    <source>
        <strain>DSM 114642 / LMG 32736 / 3841</strain>
    </source>
</reference>
<reference key="2">
    <citation type="journal article" date="2011" name="ACS Catal.">
        <title>A new family of biuret hydrolases involved in S-triazine ring metabolism.</title>
        <authorList>
            <person name="Cameron S.M."/>
            <person name="Durchschein K."/>
            <person name="Richman J.E."/>
            <person name="Sadowsky M.J."/>
            <person name="Wackett L.P."/>
        </authorList>
    </citation>
    <scope>FUNCTION</scope>
    <scope>CATALYTIC ACTIVITY</scope>
    <scope>ACTIVITY REGULATION</scope>
    <scope>BIOPHYSICOCHEMICAL PROPERTIES</scope>
    <source>
        <strain>DSM 114642 / LMG 32736 / 3841</strain>
    </source>
</reference>
<reference evidence="8 9 10 11 12" key="3">
    <citation type="journal article" date="2018" name="PLoS ONE">
        <title>Structural and biochemical characterization of the biuret hydrolase (BiuH) from the cyanuric acid catabolism pathway of Rhizobium leguminasorum bv. viciae 3841.</title>
        <authorList>
            <person name="Esquirol L."/>
            <person name="Peat T.S."/>
            <person name="Wilding M."/>
            <person name="Lucent D."/>
            <person name="French N.G."/>
            <person name="Hartley C.J."/>
            <person name="Newman J."/>
            <person name="Scott C."/>
        </authorList>
    </citation>
    <scope>X-RAY CRYSTALLOGRAPHY (1.59 ANGSTROMS) OF WILD-TYPE; MUTANTS ALA-142; HIS-142; SER-175 AND MUTANT SER-175 IN COMPLEX WITH BIURET</scope>
    <scope>FUNCTION</scope>
    <scope>CATALYTIC ACTIVITY</scope>
    <scope>ACTIVITY REGULATION</scope>
    <scope>BIOPHYSICOCHEMICAL PROPERTIES</scope>
    <scope>SUBUNIT</scope>
    <scope>ACTIVE SITES</scope>
    <scope>MUTAGENESIS OF ASP-36; PHE-41; LYS-142; LYS-145; CYS-175 AND GLN-215</scope>
    <source>
        <strain>DSM 114642 / LMG 32736 / 3841</strain>
    </source>
</reference>
<sequence>MDAMVETNRHFIDADPYPWPYNGALRPDNTALIIIDMQTDFCGKGGYVDHMGYDLSLVQAPIEPIKRVLAAMRAKGYHIIHTREGHRPDLADLPANKRWRSQRIGAGIGDPGPCGRILTRGEPGWDIIPELYPIEGETIIDKPGKGSFCATDLELVLNQKRIENIILTGITTDVCVSTTMREANDRGYECLLLEDCCGATDYGNHLAAIKMVKMQGGVFGSVSNSAALVEALP</sequence>
<protein>
    <recommendedName>
        <fullName evidence="4">Biuret amidohydrolase</fullName>
        <ecNumber evidence="1 2">3.5.1.84</ecNumber>
    </recommendedName>
    <alternativeName>
        <fullName evidence="3">Biuret hydrolase</fullName>
    </alternativeName>
</protein>
<organism>
    <name type="scientific">Rhizobium johnstonii (strain DSM 114642 / LMG 32736 / 3841)</name>
    <name type="common">Rhizobium leguminosarum bv. viciae</name>
    <dbReference type="NCBI Taxonomy" id="216596"/>
    <lineage>
        <taxon>Bacteria</taxon>
        <taxon>Pseudomonadati</taxon>
        <taxon>Pseudomonadota</taxon>
        <taxon>Alphaproteobacteria</taxon>
        <taxon>Hyphomicrobiales</taxon>
        <taxon>Rhizobiaceae</taxon>
        <taxon>Rhizobium/Agrobacterium group</taxon>
        <taxon>Rhizobium</taxon>
        <taxon>Rhizobium johnstonii</taxon>
    </lineage>
</organism>
<name>BIUH_RHIJ3</name>
<keyword id="KW-0002">3D-structure</keyword>
<keyword id="KW-0378">Hydrolase</keyword>
<keyword id="KW-0614">Plasmid</keyword>
<geneLocation type="plasmid" evidence="7">
    <name>pRL10</name>
</geneLocation>
<comment type="function">
    <text evidence="1 2">Involved in the degradation of cyanuric acid, an intermediate in the degradation of s-triazide herbicides such as atrazine (PubMed:21897878). Catalyzes the hydrolysis of biuret to urea-1-carboxylate (allophanate) and ammonia (PubMed:21897878, PubMed:29425231). The substrate, biuret, is formed by the spontaneous decarboxylation of carboxybiuret (PubMed:21897878).</text>
</comment>
<comment type="catalytic activity">
    <reaction evidence="1 2">
        <text>biuret + H2O = urea-1-carboxylate + NH4(+)</text>
        <dbReference type="Rhea" id="RHEA:17525"/>
        <dbReference type="ChEBI" id="CHEBI:15377"/>
        <dbReference type="ChEBI" id="CHEBI:15832"/>
        <dbReference type="ChEBI" id="CHEBI:18138"/>
        <dbReference type="ChEBI" id="CHEBI:28938"/>
        <dbReference type="EC" id="3.5.1.84"/>
    </reaction>
    <physiologicalReaction direction="left-to-right" evidence="1 2">
        <dbReference type="Rhea" id="RHEA:17526"/>
    </physiologicalReaction>
</comment>
<comment type="activity regulation">
    <text evidence="1 2">Strongly inhibited by the sulfhydryl-modifying reagents N-ethylmaleimide and iodoacetamide (PubMed:21897878). Inhibited by the substrate analog N-carbamoyl aspartic acid (PubMed:29425231).</text>
</comment>
<comment type="biophysicochemical properties">
    <kinetics>
        <KM evidence="1">23 uM for biuret</KM>
        <KM evidence="2">79 uM for biuret</KM>
        <text evidence="1 2">kcat is 4.0 sec(-1) (PubMed:21897878). kcat is 11.9 sec(-1) (PubMed:29425231).</text>
    </kinetics>
    <phDependence>
        <text evidence="1">Optimum pH is 8.5.</text>
    </phDependence>
</comment>
<comment type="subunit">
    <text evidence="2">Homotetramer.</text>
</comment>
<comment type="similarity">
    <text evidence="5">Belongs to the isochorismatase family.</text>
</comment>
<feature type="chain" id="PRO_0000455209" description="Biuret amidohydrolase">
    <location>
        <begin position="1"/>
        <end position="233"/>
    </location>
</feature>
<feature type="active site" description="Proton acceptor" evidence="6">
    <location>
        <position position="36"/>
    </location>
</feature>
<feature type="active site" evidence="6">
    <location>
        <position position="142"/>
    </location>
</feature>
<feature type="active site" description="Nucleophile" evidence="6">
    <location>
        <position position="175"/>
    </location>
</feature>
<feature type="binding site" evidence="2 11">
    <location>
        <position position="84"/>
    </location>
    <ligand>
        <name>biuret</name>
        <dbReference type="ChEBI" id="CHEBI:18138"/>
    </ligand>
</feature>
<feature type="binding site" evidence="2 11">
    <location>
        <position position="145"/>
    </location>
    <ligand>
        <name>biuret</name>
        <dbReference type="ChEBI" id="CHEBI:18138"/>
    </ligand>
</feature>
<feature type="binding site" evidence="2 11">
    <location>
        <begin position="170"/>
        <end position="175"/>
    </location>
    <ligand>
        <name>biuret</name>
        <dbReference type="ChEBI" id="CHEBI:18138"/>
    </ligand>
</feature>
<feature type="binding site" evidence="2 11">
    <location>
        <position position="215"/>
    </location>
    <ligand>
        <name>biuret</name>
        <dbReference type="ChEBI" id="CHEBI:18138"/>
    </ligand>
</feature>
<feature type="mutagenesis site" description="Loss of activity." evidence="2">
    <original>D</original>
    <variation>A</variation>
    <variation>E</variation>
    <variation>N</variation>
    <variation>Q</variation>
    <location>
        <position position="36"/>
    </location>
</feature>
<feature type="mutagenesis site" description="540-fold decrease in catalytic efficiency." evidence="2">
    <original>F</original>
    <variation>A</variation>
    <location>
        <position position="41"/>
    </location>
</feature>
<feature type="mutagenesis site" description="713-fold decrease in catalytic efficiency." evidence="2">
    <original>F</original>
    <variation>L</variation>
    <location>
        <position position="41"/>
    </location>
</feature>
<feature type="mutagenesis site" description="73-fold decrease in catalytic efficiency." evidence="2">
    <original>F</original>
    <variation>W</variation>
    <location>
        <position position="41"/>
    </location>
</feature>
<feature type="mutagenesis site" description="138-fold decrease in catalytic efficiency." evidence="2">
    <original>F</original>
    <variation>Y</variation>
    <location>
        <position position="41"/>
    </location>
</feature>
<feature type="mutagenesis site" description="Loss of activity." evidence="2">
    <original>K</original>
    <variation>A</variation>
    <variation>H</variation>
    <location>
        <position position="142"/>
    </location>
</feature>
<feature type="mutagenesis site" description="297-fold decrease in catalytic efficiency." evidence="2">
    <original>K</original>
    <variation>R</variation>
    <location>
        <position position="142"/>
    </location>
</feature>
<feature type="mutagenesis site" description="Loss of activity." evidence="2">
    <original>K</original>
    <variation>A</variation>
    <variation>H</variation>
    <variation>R</variation>
    <location>
        <position position="145"/>
    </location>
</feature>
<feature type="mutagenesis site" description="Loss of activity." evidence="2">
    <original>C</original>
    <variation>A</variation>
    <variation>S</variation>
    <location>
        <position position="175"/>
    </location>
</feature>
<feature type="mutagenesis site" description="419-fold decrease in catalytic efficiency." evidence="2">
    <original>Q</original>
    <variation>A</variation>
    <location>
        <position position="215"/>
    </location>
</feature>
<feature type="mutagenesis site" description="Loss of activity." evidence="2">
    <original>Q</original>
    <variation>D</variation>
    <location>
        <position position="215"/>
    </location>
</feature>
<feature type="mutagenesis site" description="1300-fold decrease in catalytic efficiency." evidence="2">
    <original>Q</original>
    <variation>E</variation>
    <location>
        <position position="215"/>
    </location>
</feature>
<feature type="mutagenesis site" description="38-fold decrease in catalytic efficiency." evidence="2">
    <original>Q</original>
    <variation>N</variation>
    <location>
        <position position="215"/>
    </location>
</feature>
<feature type="strand" evidence="13">
    <location>
        <begin position="15"/>
        <end position="17"/>
    </location>
</feature>
<feature type="helix" evidence="13">
    <location>
        <begin position="27"/>
        <end position="29"/>
    </location>
</feature>
<feature type="strand" evidence="13">
    <location>
        <begin position="30"/>
        <end position="35"/>
    </location>
</feature>
<feature type="helix" evidence="13">
    <location>
        <begin position="39"/>
        <end position="42"/>
    </location>
</feature>
<feature type="helix" evidence="13">
    <location>
        <begin position="47"/>
        <end position="51"/>
    </location>
</feature>
<feature type="helix" evidence="13">
    <location>
        <begin position="56"/>
        <end position="59"/>
    </location>
</feature>
<feature type="helix" evidence="13">
    <location>
        <begin position="62"/>
        <end position="74"/>
    </location>
</feature>
<feature type="strand" evidence="13">
    <location>
        <begin position="78"/>
        <end position="84"/>
    </location>
</feature>
<feature type="helix" evidence="13">
    <location>
        <begin position="95"/>
        <end position="103"/>
    </location>
</feature>
<feature type="strand" evidence="13">
    <location>
        <begin position="110"/>
        <end position="112"/>
    </location>
</feature>
<feature type="strand" evidence="14">
    <location>
        <begin position="115"/>
        <end position="117"/>
    </location>
</feature>
<feature type="helix" evidence="13">
    <location>
        <begin position="123"/>
        <end position="125"/>
    </location>
</feature>
<feature type="helix" evidence="13">
    <location>
        <begin position="129"/>
        <end position="131"/>
    </location>
</feature>
<feature type="strand" evidence="13">
    <location>
        <begin position="138"/>
        <end position="146"/>
    </location>
</feature>
<feature type="turn" evidence="13">
    <location>
        <begin position="147"/>
        <end position="150"/>
    </location>
</feature>
<feature type="helix" evidence="13">
    <location>
        <begin position="153"/>
        <end position="159"/>
    </location>
</feature>
<feature type="strand" evidence="13">
    <location>
        <begin position="164"/>
        <end position="170"/>
    </location>
</feature>
<feature type="turn" evidence="13">
    <location>
        <begin position="172"/>
        <end position="174"/>
    </location>
</feature>
<feature type="helix" evidence="13">
    <location>
        <begin position="175"/>
        <end position="185"/>
    </location>
</feature>
<feature type="strand" evidence="13">
    <location>
        <begin position="189"/>
        <end position="198"/>
    </location>
</feature>
<feature type="helix" evidence="13">
    <location>
        <begin position="202"/>
        <end position="217"/>
    </location>
</feature>
<feature type="strand" evidence="13">
    <location>
        <begin position="221"/>
        <end position="223"/>
    </location>
</feature>
<feature type="helix" evidence="13">
    <location>
        <begin position="225"/>
        <end position="231"/>
    </location>
</feature>
<evidence type="ECO:0000269" key="1">
    <source>
    </source>
</evidence>
<evidence type="ECO:0000269" key="2">
    <source>
    </source>
</evidence>
<evidence type="ECO:0000303" key="3">
    <source>
    </source>
</evidence>
<evidence type="ECO:0000303" key="4">
    <source>
    </source>
</evidence>
<evidence type="ECO:0000305" key="5"/>
<evidence type="ECO:0000305" key="6">
    <source>
    </source>
</evidence>
<evidence type="ECO:0000312" key="7">
    <source>
        <dbReference type="EMBL" id="CAK10578.1"/>
    </source>
</evidence>
<evidence type="ECO:0007744" key="8">
    <source>
        <dbReference type="PDB" id="5BK6"/>
    </source>
</evidence>
<evidence type="ECO:0007744" key="9">
    <source>
        <dbReference type="PDB" id="6AZN"/>
    </source>
</evidence>
<evidence type="ECO:0007744" key="10">
    <source>
        <dbReference type="PDB" id="6AZO"/>
    </source>
</evidence>
<evidence type="ECO:0007744" key="11">
    <source>
        <dbReference type="PDB" id="6AZQ"/>
    </source>
</evidence>
<evidence type="ECO:0007744" key="12">
    <source>
        <dbReference type="PDB" id="6AZS"/>
    </source>
</evidence>
<evidence type="ECO:0007829" key="13">
    <source>
        <dbReference type="PDB" id="5BK6"/>
    </source>
</evidence>
<evidence type="ECO:0007829" key="14">
    <source>
        <dbReference type="PDB" id="6AZO"/>
    </source>
</evidence>
<accession>Q1M7F4</accession>